<dbReference type="EC" id="2.7.11.1"/>
<dbReference type="EMBL" id="AY261360">
    <property type="status" value="NOT_ANNOTATED_CDS"/>
    <property type="molecule type" value="Genomic_DNA"/>
</dbReference>
<dbReference type="SMR" id="P0C8F4"/>
<dbReference type="Proteomes" id="UP000000861">
    <property type="component" value="Segment"/>
</dbReference>
<dbReference type="GO" id="GO:0030430">
    <property type="term" value="C:host cell cytoplasm"/>
    <property type="evidence" value="ECO:0007669"/>
    <property type="project" value="UniProtKB-SubCell"/>
</dbReference>
<dbReference type="GO" id="GO:0044423">
    <property type="term" value="C:virion component"/>
    <property type="evidence" value="ECO:0007669"/>
    <property type="project" value="UniProtKB-KW"/>
</dbReference>
<dbReference type="GO" id="GO:0005524">
    <property type="term" value="F:ATP binding"/>
    <property type="evidence" value="ECO:0007669"/>
    <property type="project" value="UniProtKB-KW"/>
</dbReference>
<dbReference type="GO" id="GO:0106310">
    <property type="term" value="F:protein serine kinase activity"/>
    <property type="evidence" value="ECO:0007669"/>
    <property type="project" value="RHEA"/>
</dbReference>
<dbReference type="GO" id="GO:0004674">
    <property type="term" value="F:protein serine/threonine kinase activity"/>
    <property type="evidence" value="ECO:0007669"/>
    <property type="project" value="UniProtKB-KW"/>
</dbReference>
<dbReference type="Gene3D" id="1.10.510.10">
    <property type="entry name" value="Transferase(Phosphotransferase) domain 1"/>
    <property type="match status" value="1"/>
</dbReference>
<dbReference type="InterPro" id="IPR011009">
    <property type="entry name" value="Kinase-like_dom_sf"/>
</dbReference>
<dbReference type="InterPro" id="IPR051138">
    <property type="entry name" value="PIM_Ser/Thr_kinase"/>
</dbReference>
<dbReference type="InterPro" id="IPR000719">
    <property type="entry name" value="Prot_kinase_dom"/>
</dbReference>
<dbReference type="InterPro" id="IPR008271">
    <property type="entry name" value="Ser/Thr_kinase_AS"/>
</dbReference>
<dbReference type="PANTHER" id="PTHR22984:SF25">
    <property type="entry name" value="PROTEIN KINASE DOMAIN-CONTAINING PROTEIN"/>
    <property type="match status" value="1"/>
</dbReference>
<dbReference type="PANTHER" id="PTHR22984">
    <property type="entry name" value="SERINE/THREONINE-PROTEIN KINASE PIM"/>
    <property type="match status" value="1"/>
</dbReference>
<dbReference type="Pfam" id="PF00069">
    <property type="entry name" value="Pkinase"/>
    <property type="match status" value="1"/>
</dbReference>
<dbReference type="SMART" id="SM00220">
    <property type="entry name" value="S_TKc"/>
    <property type="match status" value="1"/>
</dbReference>
<dbReference type="SUPFAM" id="SSF56112">
    <property type="entry name" value="Protein kinase-like (PK-like)"/>
    <property type="match status" value="1"/>
</dbReference>
<dbReference type="PROSITE" id="PS50011">
    <property type="entry name" value="PROTEIN_KINASE_DOM"/>
    <property type="match status" value="1"/>
</dbReference>
<dbReference type="PROSITE" id="PS00108">
    <property type="entry name" value="PROTEIN_KINASE_ST"/>
    <property type="match status" value="1"/>
</dbReference>
<organism>
    <name type="scientific">African swine fever virus (isolate Pig/Kenya/KEN-50/1950)</name>
    <name type="common">ASFV</name>
    <dbReference type="NCBI Taxonomy" id="561445"/>
    <lineage>
        <taxon>Viruses</taxon>
        <taxon>Varidnaviria</taxon>
        <taxon>Bamfordvirae</taxon>
        <taxon>Nucleocytoviricota</taxon>
        <taxon>Pokkesviricetes</taxon>
        <taxon>Asfuvirales</taxon>
        <taxon>Asfarviridae</taxon>
        <taxon>Asfivirus</taxon>
        <taxon>African swine fever virus</taxon>
    </lineage>
</organism>
<organismHost>
    <name type="scientific">Ornithodoros</name>
    <name type="common">relapsing fever ticks</name>
    <dbReference type="NCBI Taxonomy" id="6937"/>
</organismHost>
<organismHost>
    <name type="scientific">Phacochoerus aethiopicus</name>
    <name type="common">Warthog</name>
    <dbReference type="NCBI Taxonomy" id="85517"/>
</organismHost>
<organismHost>
    <name type="scientific">Phacochoerus africanus</name>
    <name type="common">Warthog</name>
    <dbReference type="NCBI Taxonomy" id="41426"/>
</organismHost>
<organismHost>
    <name type="scientific">Potamochoerus larvatus</name>
    <name type="common">Bushpig</name>
    <dbReference type="NCBI Taxonomy" id="273792"/>
</organismHost>
<organismHost>
    <name type="scientific">Sus scrofa</name>
    <name type="common">Pig</name>
    <dbReference type="NCBI Taxonomy" id="9823"/>
</organismHost>
<proteinExistence type="inferred from homology"/>
<keyword id="KW-0067">ATP-binding</keyword>
<keyword id="KW-1035">Host cytoplasm</keyword>
<keyword id="KW-0418">Kinase</keyword>
<keyword id="KW-0547">Nucleotide-binding</keyword>
<keyword id="KW-0723">Serine/threonine-protein kinase</keyword>
<keyword id="KW-0808">Transferase</keyword>
<keyword id="KW-0946">Virion</keyword>
<reference key="1">
    <citation type="submission" date="2003-03" db="EMBL/GenBank/DDBJ databases">
        <title>African swine fever virus genomes.</title>
        <authorList>
            <person name="Kutish G.F."/>
            <person name="Rock D.L."/>
        </authorList>
    </citation>
    <scope>NUCLEOTIDE SEQUENCE [LARGE SCALE GENOMIC DNA]</scope>
</reference>
<protein>
    <recommendedName>
        <fullName>Serine/threonine-protein kinase 1</fullName>
        <ecNumber>2.7.11.1</ecNumber>
    </recommendedName>
</protein>
<gene>
    <name type="ordered locus">Ken-133</name>
</gene>
<accession>P0C8F4</accession>
<comment type="function">
    <text>Essential for viral replication. It may mediate the virus progression through DNA replication.</text>
</comment>
<comment type="catalytic activity">
    <reaction>
        <text>L-seryl-[protein] + ATP = O-phospho-L-seryl-[protein] + ADP + H(+)</text>
        <dbReference type="Rhea" id="RHEA:17989"/>
        <dbReference type="Rhea" id="RHEA-COMP:9863"/>
        <dbReference type="Rhea" id="RHEA-COMP:11604"/>
        <dbReference type="ChEBI" id="CHEBI:15378"/>
        <dbReference type="ChEBI" id="CHEBI:29999"/>
        <dbReference type="ChEBI" id="CHEBI:30616"/>
        <dbReference type="ChEBI" id="CHEBI:83421"/>
        <dbReference type="ChEBI" id="CHEBI:456216"/>
        <dbReference type="EC" id="2.7.11.1"/>
    </reaction>
</comment>
<comment type="catalytic activity">
    <reaction>
        <text>L-threonyl-[protein] + ATP = O-phospho-L-threonyl-[protein] + ADP + H(+)</text>
        <dbReference type="Rhea" id="RHEA:46608"/>
        <dbReference type="Rhea" id="RHEA-COMP:11060"/>
        <dbReference type="Rhea" id="RHEA-COMP:11605"/>
        <dbReference type="ChEBI" id="CHEBI:15378"/>
        <dbReference type="ChEBI" id="CHEBI:30013"/>
        <dbReference type="ChEBI" id="CHEBI:30616"/>
        <dbReference type="ChEBI" id="CHEBI:61977"/>
        <dbReference type="ChEBI" id="CHEBI:456216"/>
        <dbReference type="EC" id="2.7.11.1"/>
    </reaction>
</comment>
<comment type="subcellular location">
    <subcellularLocation>
        <location evidence="1">Virion</location>
    </subcellularLocation>
    <subcellularLocation>
        <location evidence="1">Host cytoplasm</location>
    </subcellularLocation>
</comment>
<comment type="similarity">
    <text evidence="2">Belongs to the protein kinase superfamily. Ser/Thr protein kinase family.</text>
</comment>
<sequence>MSRPEQQFKKVLKNPQAQYAVYPTVKVERISTTEHSYFIATKPMFEGGRRNNVFLGQQIRQSVVFKYVSKKEIPGNEVIVMKALQDTPGIIKLIEYTENAMYYILIIEYIPNSVDLLHYHYFKKLEENEAKKIMFQLILIIQNIYEKGFIHGDIKDENLIIDIKQKMIKVIDFGSAVRLNEDHPQYNMFGTWEYVCPEFYYYGYYYQLPLTVWTIGMVAVNLFRFRAENFYLNDILKGENYIPDHISETGKQFITDCLTINENKRLSFKGLVSHPWFKGLKKEIQPISELGVDYKNVIT</sequence>
<name>PK1_ASFK5</name>
<evidence type="ECO:0000250" key="1">
    <source>
        <dbReference type="UniProtKB" id="P42493"/>
    </source>
</evidence>
<evidence type="ECO:0000255" key="2">
    <source>
        <dbReference type="PROSITE-ProRule" id="PRU00159"/>
    </source>
</evidence>
<evidence type="ECO:0000255" key="3">
    <source>
        <dbReference type="PROSITE-ProRule" id="PRU10027"/>
    </source>
</evidence>
<feature type="chain" id="PRO_0000355059" description="Serine/threonine-protein kinase 1">
    <location>
        <begin position="1"/>
        <end position="299"/>
    </location>
</feature>
<feature type="domain" description="Protein kinase" evidence="2">
    <location>
        <begin position="39"/>
        <end position="277"/>
    </location>
</feature>
<feature type="active site" description="Proton acceptor" evidence="2 3">
    <location>
        <position position="153"/>
    </location>
</feature>
<feature type="binding site" evidence="2">
    <location>
        <begin position="45"/>
        <end position="53"/>
    </location>
    <ligand>
        <name>ATP</name>
        <dbReference type="ChEBI" id="CHEBI:30616"/>
    </ligand>
</feature>
<feature type="binding site" evidence="2">
    <location>
        <position position="66"/>
    </location>
    <ligand>
        <name>ATP</name>
        <dbReference type="ChEBI" id="CHEBI:30616"/>
    </ligand>
</feature>